<protein>
    <recommendedName>
        <fullName>Inner capsid protein VP1</fullName>
    </recommendedName>
</protein>
<organism>
    <name type="scientific">Lymantria dispar cypovirus 1 (isolate Rao)</name>
    <name type="common">LdCPV-1</name>
    <dbReference type="NCBI Taxonomy" id="648169"/>
    <lineage>
        <taxon>Viruses</taxon>
        <taxon>Riboviria</taxon>
        <taxon>Orthornavirae</taxon>
        <taxon>Duplornaviricota</taxon>
        <taxon>Resentoviricetes</taxon>
        <taxon>Reovirales</taxon>
        <taxon>Spinareoviridae</taxon>
        <taxon>Cypovirus</taxon>
        <taxon>Cypovirus 1</taxon>
    </lineage>
</organism>
<proteinExistence type="inferred from homology"/>
<evidence type="ECO:0000250" key="1">
    <source>
        <dbReference type="UniProtKB" id="P15024"/>
    </source>
</evidence>
<evidence type="ECO:0000256" key="2">
    <source>
        <dbReference type="SAM" id="MobiDB-lite"/>
    </source>
</evidence>
<evidence type="ECO:0000305" key="3"/>
<feature type="chain" id="PRO_0000403205" description="Inner capsid protein VP1">
    <location>
        <begin position="1"/>
        <end position="1333"/>
    </location>
</feature>
<feature type="region of interest" description="Disordered" evidence="2">
    <location>
        <begin position="1"/>
        <end position="93"/>
    </location>
</feature>
<feature type="compositionally biased region" description="Polar residues" evidence="2">
    <location>
        <begin position="1"/>
        <end position="10"/>
    </location>
</feature>
<feature type="compositionally biased region" description="Basic and acidic residues" evidence="2">
    <location>
        <begin position="11"/>
        <end position="20"/>
    </location>
</feature>
<feature type="compositionally biased region" description="Polar residues" evidence="2">
    <location>
        <begin position="64"/>
        <end position="82"/>
    </location>
</feature>
<sequence>MHSTTNNSNKRNNEEKHKQPEANGSADNGEGASGTRNQTAGDTTPEAGTRNETEAGAGARGQTDGASRSGTNAKVATASSARQMDMEKAAETTSTIENVNDVGIMQQKKPPTVIQSRTDVFNEQFANEALHPTTKVIFNGLDVNTEVQPLSDDFEQISDPKGYLTYSVKYEDQFAKKDKLRASEADDRIVGPTVNLFKYGSAVVNIDLNQDFFDTTTGINLTKGILLVQDLLVPIGVTAGAEQSSEYVSGLLMVLFKVMTDNRLVIVGETTTPISNTLSTVVNNILRTTYHNNVGINPALLRDFTHVNWLNQDITNMLQQAGTRFGLGLTATRLDYVRLVKTIVGYALDIDHFAASVLNINLRALMEANVTADDRIKALQAHSMISTQFHGPNQGALRPELAFDHDHVIRCLMLAAANYPRLEGIIVQINTGYVASTNVIRPVSEKRYFPENLEQNQSAARLVSAVKARASEADISSIHLAIAREVSPMFNVHELKKIAESFEDPSSIVVVLEFILFSLFFPTEFNRIKGDIQNVLLLFFSRWYPVEYGIFIQRGATYTINAAGEFEFSGRNEKWDQSSYLSEHFPALFSDVPLAGANTIIAIMRLFTPQGFLRTDDLAIAANFPRASRNPQTYIPYTNQRGTVTNEFASRFRTIVATLANVVNERAVQDDMQKATRSCTKQWLRHLETQFDNIAVAHTDHLSVVYATMSNFMLNFTNNFSGNHATFKPEQYVITSPEGSYKPIMERQGETVDGLTIIDTSIVWPILCQCTYPLVRQSGKGVDAVSIMEEIVYPDPGTTLSQSLSVAQILSKLTLPDAFINMILSGGDSVAMRTYQTEANDELDEGIRMTTYDQYLSHIRERLHITNVPDPIYITGASTPDQIAASVQATHVAVVLYQNGVINGPASTYLRENEVLVVMPDYSNVAARFVYANAQMNNNRYHESVLEIADIFDQADFIQTDNAVRRLRALMPTLSTSQIRHAIERIAQITNVDSTDYGKLTLRFLGTLTRPLKMQNAQIRRIRPDGTVLRYDDQIDIEAFRWSRYFLDELQLRRLAVGLRLIANPRIARRFNGVRIMYLTDDDPDPDFVPAIPEGYVAVQYAHRLFSSSLANKRNRVTYTHPPTGMAYPSPTGRPHVHLTINERAGMSKLVADNIIASVIKSNWVVDILDIEYTAEVMTPSEGYTQHVDAESIMTAPKGKLFHLQFMDGLLRPEPSAFDPPASGEDIRLIYPLQPISVARSMRAIVNHNEVDRPRGAVAPSSYEMDTGTLSRNGDLLYSPVENGQAGIPKLEVDHISFSNVVSMMTSNIRTGDDMAVERVNPSDIRAINIRNA</sequence>
<reference key="1">
    <citation type="submission" date="2001-06" db="EMBL/GenBank/DDBJ databases">
        <title>Identification of dsRNA electrophoretypes of two cypoviruses from a dual infection in gypsy moth, Lymantria dispar.</title>
        <authorList>
            <person name="Rao S."/>
            <person name="Shapiro M."/>
            <person name="Lynn D."/>
            <person name="Hagiwara K."/>
            <person name="Blackmon B."/>
            <person name="Fang G."/>
            <person name="Carner G.R."/>
        </authorList>
    </citation>
    <scope>NUCLEOTIDE SEQUENCE [GENOMIC RNA]</scope>
</reference>
<accession>Q91IE1</accession>
<gene>
    <name type="primary">S1</name>
</gene>
<organismHost>
    <name type="scientific">Lymantria dispar</name>
    <name type="common">Gypsy moth</name>
    <name type="synonym">Porthetria dispar</name>
    <dbReference type="NCBI Taxonomy" id="13123"/>
</organismHost>
<keyword id="KW-0167">Capsid protein</keyword>
<keyword id="KW-1153">Inner capsid protein</keyword>
<keyword id="KW-1185">Reference proteome</keyword>
<keyword id="KW-1141">T=2 icosahedral capsid protein</keyword>
<keyword id="KW-0946">Virion</keyword>
<dbReference type="EMBL" id="AF389462">
    <property type="protein sequence ID" value="AAK73520.1"/>
    <property type="molecule type" value="Genomic_RNA"/>
</dbReference>
<dbReference type="RefSeq" id="NP_149146.1">
    <property type="nucleotide sequence ID" value="NC_003016.1"/>
</dbReference>
<dbReference type="SMR" id="Q91IE1"/>
<dbReference type="KEGG" id="vg:2598188"/>
<dbReference type="Proteomes" id="UP000006712">
    <property type="component" value="Genome"/>
</dbReference>
<dbReference type="GO" id="GO:0039616">
    <property type="term" value="C:T=2 icosahedral viral capsid"/>
    <property type="evidence" value="ECO:0007669"/>
    <property type="project" value="UniProtKB-KW"/>
</dbReference>
<dbReference type="GO" id="GO:0039625">
    <property type="term" value="C:viral inner capsid"/>
    <property type="evidence" value="ECO:0007669"/>
    <property type="project" value="UniProtKB-KW"/>
</dbReference>
<dbReference type="InterPro" id="IPR049422">
    <property type="entry name" value="VP1/VP3_C"/>
</dbReference>
<dbReference type="InterPro" id="IPR049421">
    <property type="entry name" value="VP1_protrusion"/>
</dbReference>
<dbReference type="Pfam" id="PF21416">
    <property type="entry name" value="VP1-like_C"/>
    <property type="match status" value="1"/>
</dbReference>
<dbReference type="Pfam" id="PF20855">
    <property type="entry name" value="VP1_protrusion"/>
    <property type="match status" value="1"/>
</dbReference>
<name>CAPSD_LDCPR</name>
<comment type="function">
    <text evidence="1">Inner capsid protein that self-assembles to form an icosahedral capsid with a T=2 symmetry, which consists of 120 copies of VP2, with channels at each of its five-fold vertices. This capsid constitutes the innermost concentric layer of the viral mature particle.</text>
</comment>
<comment type="subunit">
    <text evidence="1">Homodecamer; each decamer is made up of two conformers of VP2, called VP2A and VP2B. 12 homodecamers assemble to form an icosahedral capsid.</text>
</comment>
<comment type="subcellular location">
    <subcellularLocation>
        <location evidence="1">Virion</location>
    </subcellularLocation>
    <text evidence="1">Found in the inner capsid (120 copies).</text>
</comment>
<comment type="similarity">
    <text evidence="3">Belongs to the turreted BTV-fold inner capsid family.</text>
</comment>